<proteinExistence type="evidence at protein level"/>
<protein>
    <recommendedName>
        <fullName evidence="10">[F-actin]-monooxygenase MICAL2</fullName>
        <ecNumber evidence="3">1.14.13.225</ecNumber>
    </recommendedName>
    <alternativeName>
        <fullName>MICAL C-terminal-like protein</fullName>
        <shortName>Mical-cL</shortName>
    </alternativeName>
    <alternativeName>
        <fullName>Molecule interacting with CasL protein 2</fullName>
        <shortName>MICAL-2</shortName>
    </alternativeName>
    <alternativeName>
        <fullName>Protein RSB-11-77</fullName>
    </alternativeName>
</protein>
<organism>
    <name type="scientific">Rattus norvegicus</name>
    <name type="common">Rat</name>
    <dbReference type="NCBI Taxonomy" id="10116"/>
    <lineage>
        <taxon>Eukaryota</taxon>
        <taxon>Metazoa</taxon>
        <taxon>Chordata</taxon>
        <taxon>Craniata</taxon>
        <taxon>Vertebrata</taxon>
        <taxon>Euteleostomi</taxon>
        <taxon>Mammalia</taxon>
        <taxon>Eutheria</taxon>
        <taxon>Euarchontoglires</taxon>
        <taxon>Glires</taxon>
        <taxon>Rodentia</taxon>
        <taxon>Myomorpha</taxon>
        <taxon>Muroidea</taxon>
        <taxon>Muridae</taxon>
        <taxon>Murinae</taxon>
        <taxon>Rattus</taxon>
    </lineage>
</organism>
<name>MICA2_RAT</name>
<feature type="chain" id="PRO_0000416302" description="[F-actin]-monooxygenase MICAL2">
    <location>
        <begin position="1"/>
        <end position="1948"/>
    </location>
</feature>
<feature type="domain" description="Calponin-homology (CH)" evidence="6">
    <location>
        <begin position="516"/>
        <end position="619"/>
    </location>
</feature>
<feature type="domain" description="LIM zinc-binding" evidence="7">
    <location>
        <begin position="980"/>
        <end position="1042"/>
    </location>
</feature>
<feature type="domain" description="bMERB" evidence="8">
    <location>
        <begin position="1786"/>
        <end position="1936"/>
    </location>
</feature>
<feature type="region of interest" description="Monooxygenase domain" evidence="5">
    <location>
        <begin position="2"/>
        <end position="494"/>
    </location>
</feature>
<feature type="region of interest" description="Disordered" evidence="9">
    <location>
        <begin position="664"/>
        <end position="709"/>
    </location>
</feature>
<feature type="region of interest" description="Disordered" evidence="9">
    <location>
        <begin position="753"/>
        <end position="776"/>
    </location>
</feature>
<feature type="region of interest" description="Disordered" evidence="9">
    <location>
        <begin position="891"/>
        <end position="923"/>
    </location>
</feature>
<feature type="region of interest" description="Disordered" evidence="9">
    <location>
        <begin position="1045"/>
        <end position="1134"/>
    </location>
</feature>
<feature type="region of interest" description="Disordered" evidence="9">
    <location>
        <begin position="1146"/>
        <end position="1185"/>
    </location>
</feature>
<feature type="region of interest" description="Disordered" evidence="9">
    <location>
        <begin position="1233"/>
        <end position="1298"/>
    </location>
</feature>
<feature type="region of interest" description="Interaction with MAPK1" evidence="3">
    <location>
        <begin position="1300"/>
        <end position="1339"/>
    </location>
</feature>
<feature type="region of interest" description="Disordered" evidence="9">
    <location>
        <begin position="1478"/>
        <end position="1505"/>
    </location>
</feature>
<feature type="region of interest" description="Disordered" evidence="9">
    <location>
        <begin position="1519"/>
        <end position="1622"/>
    </location>
</feature>
<feature type="region of interest" description="Disordered" evidence="9">
    <location>
        <begin position="1672"/>
        <end position="1726"/>
    </location>
</feature>
<feature type="region of interest" description="Disordered" evidence="9">
    <location>
        <begin position="1739"/>
        <end position="1767"/>
    </location>
</feature>
<feature type="short sequence motif" description="Nuclear localization signal" evidence="1">
    <location>
        <begin position="660"/>
        <end position="681"/>
    </location>
</feature>
<feature type="compositionally biased region" description="Polar residues" evidence="9">
    <location>
        <begin position="693"/>
        <end position="709"/>
    </location>
</feature>
<feature type="compositionally biased region" description="Pro residues" evidence="9">
    <location>
        <begin position="896"/>
        <end position="917"/>
    </location>
</feature>
<feature type="compositionally biased region" description="Basic and acidic residues" evidence="9">
    <location>
        <begin position="1050"/>
        <end position="1059"/>
    </location>
</feature>
<feature type="compositionally biased region" description="Polar residues" evidence="9">
    <location>
        <begin position="1233"/>
        <end position="1243"/>
    </location>
</feature>
<feature type="compositionally biased region" description="Low complexity" evidence="9">
    <location>
        <begin position="1254"/>
        <end position="1271"/>
    </location>
</feature>
<feature type="compositionally biased region" description="Polar residues" evidence="9">
    <location>
        <begin position="1277"/>
        <end position="1292"/>
    </location>
</feature>
<feature type="compositionally biased region" description="Basic and acidic residues" evidence="9">
    <location>
        <begin position="1522"/>
        <end position="1534"/>
    </location>
</feature>
<feature type="compositionally biased region" description="Low complexity" evidence="9">
    <location>
        <begin position="1570"/>
        <end position="1579"/>
    </location>
</feature>
<feature type="compositionally biased region" description="Polar residues" evidence="9">
    <location>
        <begin position="1580"/>
        <end position="1591"/>
    </location>
</feature>
<feature type="compositionally biased region" description="Basic and acidic residues" evidence="9">
    <location>
        <begin position="1672"/>
        <end position="1682"/>
    </location>
</feature>
<feature type="compositionally biased region" description="Polar residues" evidence="9">
    <location>
        <begin position="1698"/>
        <end position="1715"/>
    </location>
</feature>
<feature type="compositionally biased region" description="Polar residues" evidence="9">
    <location>
        <begin position="1747"/>
        <end position="1756"/>
    </location>
</feature>
<feature type="binding site" evidence="5">
    <location>
        <position position="97"/>
    </location>
    <ligand>
        <name>FAD</name>
        <dbReference type="ChEBI" id="CHEBI:57692"/>
    </ligand>
</feature>
<feature type="binding site" evidence="5">
    <location>
        <begin position="116"/>
        <end position="118"/>
    </location>
    <ligand>
        <name>FAD</name>
        <dbReference type="ChEBI" id="CHEBI:57692"/>
    </ligand>
</feature>
<feature type="binding site" evidence="5">
    <location>
        <begin position="123"/>
        <end position="125"/>
    </location>
    <ligand>
        <name>FAD</name>
        <dbReference type="ChEBI" id="CHEBI:57692"/>
    </ligand>
</feature>
<feature type="binding site" evidence="5">
    <location>
        <position position="183"/>
    </location>
    <ligand>
        <name>FAD</name>
        <dbReference type="ChEBI" id="CHEBI:57692"/>
    </ligand>
</feature>
<feature type="binding site" evidence="5">
    <location>
        <position position="298"/>
    </location>
    <ligand>
        <name>FAD</name>
        <dbReference type="ChEBI" id="CHEBI:57692"/>
    </ligand>
</feature>
<feature type="binding site" evidence="5">
    <location>
        <position position="398"/>
    </location>
    <ligand>
        <name>FAD</name>
        <dbReference type="ChEBI" id="CHEBI:57692"/>
    </ligand>
</feature>
<feature type="binding site" evidence="4">
    <location>
        <position position="982"/>
    </location>
    <ligand>
        <name>Zn(2+)</name>
        <dbReference type="ChEBI" id="CHEBI:29105"/>
        <label>1</label>
    </ligand>
</feature>
<feature type="binding site" evidence="4">
    <location>
        <position position="985"/>
    </location>
    <ligand>
        <name>Zn(2+)</name>
        <dbReference type="ChEBI" id="CHEBI:29105"/>
        <label>1</label>
    </ligand>
</feature>
<feature type="binding site" evidence="4">
    <location>
        <position position="1003"/>
    </location>
    <ligand>
        <name>Zn(2+)</name>
        <dbReference type="ChEBI" id="CHEBI:29105"/>
        <label>1</label>
    </ligand>
</feature>
<feature type="binding site" evidence="4">
    <location>
        <position position="1006"/>
    </location>
    <ligand>
        <name>Zn(2+)</name>
        <dbReference type="ChEBI" id="CHEBI:29105"/>
        <label>1</label>
    </ligand>
</feature>
<feature type="binding site" evidence="4">
    <location>
        <position position="1009"/>
    </location>
    <ligand>
        <name>Zn(2+)</name>
        <dbReference type="ChEBI" id="CHEBI:29105"/>
        <label>2</label>
    </ligand>
</feature>
<feature type="binding site" evidence="4">
    <location>
        <position position="1012"/>
    </location>
    <ligand>
        <name>Zn(2+)</name>
        <dbReference type="ChEBI" id="CHEBI:29105"/>
        <label>2</label>
    </ligand>
</feature>
<feature type="binding site" evidence="4">
    <location>
        <position position="1032"/>
    </location>
    <ligand>
        <name>Zn(2+)</name>
        <dbReference type="ChEBI" id="CHEBI:29105"/>
        <label>2</label>
    </ligand>
</feature>
<feature type="binding site" evidence="4">
    <location>
        <position position="1035"/>
    </location>
    <ligand>
        <name>Zn(2+)</name>
        <dbReference type="ChEBI" id="CHEBI:29105"/>
        <label>2</label>
    </ligand>
</feature>
<feature type="modified residue" description="Phosphoserine" evidence="2">
    <location>
        <position position="631"/>
    </location>
</feature>
<feature type="modified residue" description="Phosphoserine" evidence="12">
    <location>
        <position position="1677"/>
    </location>
</feature>
<feature type="splice variant" id="VSP_061315" description="In isoform 5.">
    <location>
        <begin position="1"/>
        <end position="1238"/>
    </location>
</feature>
<feature type="splice variant" id="VSP_061316" description="In isoform 1.">
    <location>
        <begin position="737"/>
        <end position="964"/>
    </location>
</feature>
<feature type="splice variant" id="VSP_061317" description="In isoform 2.">
    <location>
        <position position="928"/>
    </location>
</feature>
<feature type="splice variant" id="VSP_061318" description="In isoform 1.">
    <original>DEPISPKKSKSVPKPNSRPMEVEATSPRPSEWTSVRIGPGQDGQDVLAVRVLVTSEDSSSDTESDSGSIIGPCTEACEERPRLPESPPLSQPLTRHIS</original>
    <variation>GISTSFFRKALSWPLRLTRGLLNLPQSLLRWMQGLLQAAGHHVRDNAHNYCFMFELLSLGLLLLWAFSEVLAAMYRESEESLESIRSWLLRFVPVKLQ</variation>
    <location>
        <begin position="1092"/>
        <end position="1189"/>
    </location>
</feature>
<feature type="splice variant" id="VSP_061319" description="In isoform 2.">
    <original>DEPISPKKSKSVP</original>
    <variation>VRFSLPVLHPLLG</variation>
    <location>
        <begin position="1092"/>
        <end position="1104"/>
    </location>
</feature>
<feature type="splice variant" id="VSP_061320" description="In isoform 2.">
    <location>
        <begin position="1105"/>
        <end position="1948"/>
    </location>
</feature>
<feature type="splice variant" id="VSP_061321" description="In isoform 1.">
    <location>
        <begin position="1190"/>
        <end position="1948"/>
    </location>
</feature>
<feature type="splice variant" id="VSP_061322" description="In isoform 5.">
    <original>T</original>
    <variation>PA</variation>
    <location>
        <position position="1284"/>
    </location>
</feature>
<feature type="splice variant" id="VSP_061323" description="In isoform 4, isoform 5 and isoform 6.">
    <original>QAAVRTQAGKEGSSLVSSLVLVSG</original>
    <variation>R</variation>
    <location>
        <begin position="1717"/>
        <end position="1740"/>
    </location>
</feature>
<feature type="splice variant" id="VSP_061324" description="In isoform 4 and isoform 5.">
    <location>
        <position position="1829"/>
    </location>
</feature>
<feature type="sequence conflict" description="In Ref. 3; AAN46735." evidence="10" ref="3">
    <original>P</original>
    <variation>Q</variation>
    <location>
        <position position="1377"/>
    </location>
</feature>
<feature type="sequence conflict" description="In Ref. 3; AAN46735." evidence="10" ref="3">
    <original>A</original>
    <variation>S</variation>
    <location>
        <position position="1447"/>
    </location>
</feature>
<feature type="sequence conflict" description="In Ref. 3; AAN46735." evidence="10" ref="3">
    <original>A</original>
    <variation>V</variation>
    <location>
        <position position="1522"/>
    </location>
</feature>
<feature type="sequence conflict" description="In Ref. 3; AAN46735." evidence="10" ref="3">
    <original>KPET</original>
    <variation>NPEA</variation>
    <location>
        <begin position="1529"/>
        <end position="1532"/>
    </location>
</feature>
<feature type="sequence conflict" description="In Ref. 3; AAN46735." evidence="10" ref="3">
    <original>A</original>
    <variation>T</variation>
    <location>
        <position position="1585"/>
    </location>
</feature>
<feature type="sequence conflict" description="In Ref. 3; AAN46735." evidence="10" ref="3">
    <original>PNPILR</original>
    <variation>SNPFFG</variation>
    <location>
        <begin position="1593"/>
        <end position="1598"/>
    </location>
</feature>
<feature type="sequence conflict" description="In Ref. 3; AAN46735." evidence="10" ref="3">
    <original>R</original>
    <variation>G</variation>
    <location>
        <position position="1775"/>
    </location>
</feature>
<feature type="sequence conflict" description="In Ref. 3; AAN46735." evidence="10" ref="3">
    <original>A</original>
    <variation>V</variation>
    <location>
        <position position="1785"/>
    </location>
</feature>
<feature type="sequence conflict" description="In Ref. 3; AAN46735." evidence="10" ref="3">
    <original>E</original>
    <variation>K</variation>
    <location>
        <position position="1904"/>
    </location>
</feature>
<feature type="sequence conflict" description="In Ref. 3; AAN46735." evidence="10" ref="3">
    <original>H</original>
    <variation>L</variation>
    <location>
        <position position="1933"/>
    </location>
</feature>
<feature type="sequence conflict" description="In Ref. 3; AAN46735." evidence="10" ref="3">
    <location>
        <begin position="1935"/>
        <end position="1948"/>
    </location>
</feature>
<accession>D4A1F2</accession>
<accession>F1LW55</accession>
<accession>Q498N8</accession>
<accession>Q4G091</accession>
<accession>Q80WN5</accession>
<sequence>MGENEDEKQAQASQVFENFVQATTCKGTLQAFNILTCLLDLDPLDHRNFYTQLKSKVNTWKAKALWHKLDKRGSHKEYKRGKACSNTKCLIVGGGPCGLRTAIELAYLGAKVVVVEKRDTFSRNNVLHLWPFTIHDLRGLGAKKFYGKFCAGSIDHISIRQLQLILFKVALMLGVEIHVNVEFVRVREPPKDQENRKIGWRAEFLPADHALSNFEFDVIIGADGHRNTLEGFRRKEFRGKLAIAITANFINRNSTAEAKVEEISGVAFIFNQKFFQDLKEETGIDLENIVYYKDSTHYFVMTAKKQSLLDKGVILNDYIDTEMLLCAENVNQDNLLSYAREAADFATNYQLPSLDFAINHNGQPDVAMFDFTSMYASENAALMRERQAHQLLVALVGDSLLEPFWPMGTGCARGFLAAFDTAWMVKSWDQGTPPLEVLAERESLYRLLPQTTPENINKNFEQYTLDPATRYPNLNVHCVRPHQVKHLYITKEMDRFPLERWGSVRRSASLSRRESDIRPNKLLTWCQQQTKGYQHVRVTDLTTSWRSGLALCAIIHSFRPELINFDSLNENDVVENNQLAFDVAKREFGILPVTTGKEMASTQEPDKLSMVMYLSKFYELFRGTPLRPMDSRRKNYGENADFGLGKTFFQNNYLNLTLPRKRTPRVDAQTEENDVNKRRRQGFNNLEELPAFSSRSLGSSQEYAKESGNQNKVKYMANQLLAKFEENTRNPSALKQDCPRVSGMGKPVLCSASRPPGTSHCPKLEESTPRLPPPLKRQFSSTVATGQVLRELNQVPASGECPGRPWRARAKSDLQLGGAENLATLPPTCQGALALSGVLRRLQQVEEKVLQKRAQNLANREFHTKNIKEKAAHLASMFGHGDLPQDKLLSKRVPHAHPPSPPSCLPSPDPAAAPSPPAADSVSPARKVLTVGKVSSGIGAAAEVLVNLYLNDHRPKTQATSPDLESLRKAEFPLSLGGRDTCYFCKKRVYVMERLSAEGHFFHRECFRCSVCAAILRVAAYAFDCDEGKFYCKLHFAHCKTSSKQRKRRAELNQQREEEGTWPEQEAARRDVPAESSCAVAAISTPEGSPPDEPISPKKSKSVPKPNSRPMEVEATSPRPSEWTSVRIGPGQDGQDVLAVRVLVTSEDSSSDTESDSGSIIGPCTEACEERPRLPESPPLSQPLTRHISLRETLTQPVSLLLHHKEPQAVPGLQRAYSLQSPSKYQNWRRKFQSNSTPMNQRALSPPKEPPPSSSSSSPSLPSSFSSASVPGHTTDDSSSPQVTYNLHSPQISRDDVSPTPIYLRRARAQGITKEIPLYLPHSPMLESTEHCLVSPDGEELRSPEEISASDGCQKALALGNSESTHKDSYPVSGKDPYLPNQMLALGAAGNTGDLSEESRMGQTGGAELSKERKLGLKKLVLTEEQKTMLLDWNDYTQEHKAGERLAQEKAENGRGNSLKPICSSTLSQAVKEKLLSQKKALGETRTPAAKAPREREVPPPKSPLRLIANAIFRSLLPSSEAGKKTSSKPETKTLPRGQPHAFTRSFSFRKLGSSKDGDQQSPGRHMAKKASAFFSLASPTSKAAQASDLSPPNPILRSRSLPNRPSKMFFATTSLPPSSKVEDVPTLLEKVSLQDAAQGPKKGASHISPLGLKDKSFESFLQECKERKDIGDFFNSPKEKGPPGNRVPSLEKLVQPVDSTSMGQVAHPSSTGQDAQAAVRTQAGKEGSSLVSSLVLVSGPGAPVTEDTSSPTSSSAEEDVETQLSSRLKEKIPRRRRKLEKQMAKQEELKRLHKAQAIQRQLEEVEERQRTSEIQGVRLEKVLRGETADSGTQDEAQLLQEWFKLVLEKNKLMRYESELLIMAQELELEDHQSRLEQKLRQKMLKDEGQKDENDLKEEQEIFEEMMQVIEQRNKLVDSLEEQRIKERTQDQHFENFVLSRGCQLSRT</sequence>
<keyword id="KW-0009">Actin-binding</keyword>
<keyword id="KW-0025">Alternative splicing</keyword>
<keyword id="KW-0963">Cytoplasm</keyword>
<keyword id="KW-0274">FAD</keyword>
<keyword id="KW-0285">Flavoprotein</keyword>
<keyword id="KW-0440">LIM domain</keyword>
<keyword id="KW-0479">Metal-binding</keyword>
<keyword id="KW-0503">Monooxygenase</keyword>
<keyword id="KW-0521">NADP</keyword>
<keyword id="KW-0539">Nucleus</keyword>
<keyword id="KW-0560">Oxidoreductase</keyword>
<keyword id="KW-0597">Phosphoprotein</keyword>
<keyword id="KW-1185">Reference proteome</keyword>
<keyword id="KW-0862">Zinc</keyword>
<dbReference type="EC" id="1.14.13.225" evidence="3"/>
<dbReference type="EMBL" id="BC098647">
    <property type="protein sequence ID" value="AAH98647.1"/>
    <property type="molecule type" value="mRNA"/>
</dbReference>
<dbReference type="EMBL" id="BC100137">
    <property type="protein sequence ID" value="AAI00138.1"/>
    <property type="status" value="ALT_INIT"/>
    <property type="molecule type" value="mRNA"/>
</dbReference>
<dbReference type="EMBL" id="AY149342">
    <property type="protein sequence ID" value="AAN46735.1"/>
    <property type="status" value="ALT_FRAME"/>
    <property type="molecule type" value="mRNA"/>
</dbReference>
<dbReference type="RefSeq" id="NP_001132980.1">
    <molecule id="D4A1F2-1"/>
    <property type="nucleotide sequence ID" value="NM_001139508.2"/>
</dbReference>
<dbReference type="RefSeq" id="NP_872610.2">
    <molecule id="D4A1F2-5"/>
    <property type="nucleotide sequence ID" value="NM_182669.2"/>
</dbReference>
<dbReference type="RefSeq" id="XP_006230127.1">
    <property type="nucleotide sequence ID" value="XM_006230065.3"/>
</dbReference>
<dbReference type="RefSeq" id="XP_006230128.1">
    <property type="nucleotide sequence ID" value="XM_006230066.3"/>
</dbReference>
<dbReference type="RefSeq" id="XP_017444980.1">
    <property type="nucleotide sequence ID" value="XM_017589491.1"/>
</dbReference>
<dbReference type="RefSeq" id="XP_063125490.1">
    <molecule id="D4A1F2-2"/>
    <property type="nucleotide sequence ID" value="XM_063269420.1"/>
</dbReference>
<dbReference type="RefSeq" id="XP_063125494.1">
    <molecule id="D4A1F2-2"/>
    <property type="nucleotide sequence ID" value="XM_063269424.1"/>
</dbReference>
<dbReference type="RefSeq" id="XP_063125499.1">
    <molecule id="D4A1F2-2"/>
    <property type="nucleotide sequence ID" value="XM_063269429.1"/>
</dbReference>
<dbReference type="RefSeq" id="XP_063125511.1">
    <molecule id="D4A1F2-1"/>
    <property type="nucleotide sequence ID" value="XM_063269441.1"/>
</dbReference>
<dbReference type="RefSeq" id="XP_063125512.1">
    <molecule id="D4A1F2-1"/>
    <property type="nucleotide sequence ID" value="XM_063269442.1"/>
</dbReference>
<dbReference type="RefSeq" id="XP_063125515.1">
    <molecule id="D4A1F2-1"/>
    <property type="nucleotide sequence ID" value="XM_063269445.1"/>
</dbReference>
<dbReference type="SMR" id="D4A1F2"/>
<dbReference type="BioGRID" id="265309">
    <property type="interactions" value="1"/>
</dbReference>
<dbReference type="FunCoup" id="D4A1F2">
    <property type="interactions" value="1718"/>
</dbReference>
<dbReference type="STRING" id="10116.ENSRNOP00000074877"/>
<dbReference type="GlyGen" id="D4A1F2">
    <property type="glycosylation" value="1 site"/>
</dbReference>
<dbReference type="iPTMnet" id="D4A1F2"/>
<dbReference type="PhosphoSitePlus" id="D4A1F2"/>
<dbReference type="PaxDb" id="10116-ENSRNOP00000039759"/>
<dbReference type="PeptideAtlas" id="D4A1F2"/>
<dbReference type="Ensembl" id="ENSRNOT00000021858.3">
    <molecule id="D4A1F2-1"/>
    <property type="protein sequence ID" value="ENSRNOP00000021858.2"/>
    <property type="gene ID" value="ENSRNOG00000016244.7"/>
</dbReference>
<dbReference type="Ensembl" id="ENSRNOT00000081595.2">
    <molecule id="D4A1F2-2"/>
    <property type="protein sequence ID" value="ENSRNOP00000074877.1"/>
    <property type="gene ID" value="ENSRNOG00000016244.7"/>
</dbReference>
<dbReference type="GeneID" id="365352"/>
<dbReference type="KEGG" id="rno:365352"/>
<dbReference type="UCSC" id="RGD:1311773">
    <property type="organism name" value="rat"/>
</dbReference>
<dbReference type="AGR" id="RGD:1311773"/>
<dbReference type="CTD" id="9645"/>
<dbReference type="RGD" id="1311773">
    <property type="gene designation" value="Mical2"/>
</dbReference>
<dbReference type="VEuPathDB" id="HostDB:ENSRNOG00000016210"/>
<dbReference type="eggNOG" id="ENOG502QWDX">
    <property type="taxonomic scope" value="Eukaryota"/>
</dbReference>
<dbReference type="eggNOG" id="KOG1700">
    <property type="taxonomic scope" value="Eukaryota"/>
</dbReference>
<dbReference type="GeneTree" id="ENSGT00940000158780"/>
<dbReference type="HOGENOM" id="CLU_000329_0_1_1"/>
<dbReference type="InParanoid" id="D4A1F2"/>
<dbReference type="PhylomeDB" id="D4A1F2"/>
<dbReference type="TreeFam" id="TF336446"/>
<dbReference type="PRO" id="PR:D4A1F2"/>
<dbReference type="Proteomes" id="UP000002494">
    <property type="component" value="Chromosome 1"/>
</dbReference>
<dbReference type="Bgee" id="ENSRNOG00000016210">
    <property type="expression patterns" value="Expressed in testis and 13 other cell types or tissues"/>
</dbReference>
<dbReference type="GO" id="GO:0005884">
    <property type="term" value="C:actin filament"/>
    <property type="evidence" value="ECO:0000266"/>
    <property type="project" value="RGD"/>
</dbReference>
<dbReference type="GO" id="GO:0005737">
    <property type="term" value="C:cytoplasm"/>
    <property type="evidence" value="ECO:0000250"/>
    <property type="project" value="UniProtKB"/>
</dbReference>
<dbReference type="GO" id="GO:0005634">
    <property type="term" value="C:nucleus"/>
    <property type="evidence" value="ECO:0000250"/>
    <property type="project" value="UniProtKB"/>
</dbReference>
<dbReference type="GO" id="GO:0003779">
    <property type="term" value="F:actin binding"/>
    <property type="evidence" value="ECO:0000250"/>
    <property type="project" value="UniProtKB"/>
</dbReference>
<dbReference type="GO" id="GO:0120501">
    <property type="term" value="F:F-actin monooxygenase activity"/>
    <property type="evidence" value="ECO:0007669"/>
    <property type="project" value="UniProtKB-EC"/>
</dbReference>
<dbReference type="GO" id="GO:0071949">
    <property type="term" value="F:FAD binding"/>
    <property type="evidence" value="ECO:0000250"/>
    <property type="project" value="UniProtKB"/>
</dbReference>
<dbReference type="GO" id="GO:0046872">
    <property type="term" value="F:metal ion binding"/>
    <property type="evidence" value="ECO:0007669"/>
    <property type="project" value="UniProtKB-KW"/>
</dbReference>
<dbReference type="GO" id="GO:0051019">
    <property type="term" value="F:mitogen-activated protein kinase binding"/>
    <property type="evidence" value="ECO:0000250"/>
    <property type="project" value="UniProtKB"/>
</dbReference>
<dbReference type="GO" id="GO:0004497">
    <property type="term" value="F:monooxygenase activity"/>
    <property type="evidence" value="ECO:0000266"/>
    <property type="project" value="RGD"/>
</dbReference>
<dbReference type="GO" id="GO:0016174">
    <property type="term" value="F:NAD(P)H oxidase H2O2-forming activity"/>
    <property type="evidence" value="ECO:0000266"/>
    <property type="project" value="RGD"/>
</dbReference>
<dbReference type="GO" id="GO:0016491">
    <property type="term" value="F:oxidoreductase activity"/>
    <property type="evidence" value="ECO:0000250"/>
    <property type="project" value="UniProtKB"/>
</dbReference>
<dbReference type="GO" id="GO:0016709">
    <property type="term" value="F:oxidoreductase activity, acting on paired donors, with incorporation or reduction of molecular oxygen, NAD(P)H as one donor, and incorporation of one atom of oxygen"/>
    <property type="evidence" value="ECO:0000250"/>
    <property type="project" value="UniProtKB"/>
</dbReference>
<dbReference type="GO" id="GO:0030042">
    <property type="term" value="P:actin filament depolymerization"/>
    <property type="evidence" value="ECO:0000250"/>
    <property type="project" value="UniProtKB"/>
</dbReference>
<dbReference type="GO" id="GO:0007010">
    <property type="term" value="P:cytoskeleton organization"/>
    <property type="evidence" value="ECO:0000250"/>
    <property type="project" value="UniProtKB"/>
</dbReference>
<dbReference type="GO" id="GO:0007507">
    <property type="term" value="P:heart development"/>
    <property type="evidence" value="ECO:0000250"/>
    <property type="project" value="UniProtKB"/>
</dbReference>
<dbReference type="GO" id="GO:0001947">
    <property type="term" value="P:heart looping"/>
    <property type="evidence" value="ECO:0000250"/>
    <property type="project" value="UniProtKB"/>
</dbReference>
<dbReference type="GO" id="GO:0045944">
    <property type="term" value="P:positive regulation of transcription by RNA polymerase II"/>
    <property type="evidence" value="ECO:0000250"/>
    <property type="project" value="UniProtKB"/>
</dbReference>
<dbReference type="GO" id="GO:0019417">
    <property type="term" value="P:sulfur oxidation"/>
    <property type="evidence" value="ECO:0000250"/>
    <property type="project" value="UniProtKB"/>
</dbReference>
<dbReference type="CDD" id="cd21250">
    <property type="entry name" value="CH_MICAL2"/>
    <property type="match status" value="1"/>
</dbReference>
<dbReference type="CDD" id="cd09439">
    <property type="entry name" value="LIM_Mical"/>
    <property type="match status" value="1"/>
</dbReference>
<dbReference type="FunFam" id="3.50.50.60:FF:000004">
    <property type="entry name" value="protein-methionine sulfoxide oxidase MICAL2 isoform X1"/>
    <property type="match status" value="1"/>
</dbReference>
<dbReference type="FunFam" id="1.10.418.10:FF:000026">
    <property type="entry name" value="protein-methionine sulfoxide oxidase MICAL3 isoform X1"/>
    <property type="match status" value="1"/>
</dbReference>
<dbReference type="Gene3D" id="1.10.418.10">
    <property type="entry name" value="Calponin-like domain"/>
    <property type="match status" value="1"/>
</dbReference>
<dbReference type="Gene3D" id="2.10.110.10">
    <property type="entry name" value="Cysteine Rich Protein"/>
    <property type="match status" value="1"/>
</dbReference>
<dbReference type="Gene3D" id="3.50.50.60">
    <property type="entry name" value="FAD/NAD(P)-binding domain"/>
    <property type="match status" value="1"/>
</dbReference>
<dbReference type="InterPro" id="IPR022735">
    <property type="entry name" value="bMERB_dom"/>
</dbReference>
<dbReference type="InterPro" id="IPR001715">
    <property type="entry name" value="CH_dom"/>
</dbReference>
<dbReference type="InterPro" id="IPR036872">
    <property type="entry name" value="CH_dom_sf"/>
</dbReference>
<dbReference type="InterPro" id="IPR050540">
    <property type="entry name" value="F-actin_Monoox_Mical"/>
</dbReference>
<dbReference type="InterPro" id="IPR002938">
    <property type="entry name" value="FAD-bd"/>
</dbReference>
<dbReference type="InterPro" id="IPR036188">
    <property type="entry name" value="FAD/NAD-bd_sf"/>
</dbReference>
<dbReference type="InterPro" id="IPR001781">
    <property type="entry name" value="Znf_LIM"/>
</dbReference>
<dbReference type="PANTHER" id="PTHR23167:SF39">
    <property type="entry name" value="[F-ACTIN]-MONOOXYGENASE MICAL2"/>
    <property type="match status" value="1"/>
</dbReference>
<dbReference type="PANTHER" id="PTHR23167">
    <property type="entry name" value="CALPONIN HOMOLOGY DOMAIN-CONTAINING PROTEIN DDB_G0272472-RELATED"/>
    <property type="match status" value="1"/>
</dbReference>
<dbReference type="Pfam" id="PF12130">
    <property type="entry name" value="bMERB_dom"/>
    <property type="match status" value="1"/>
</dbReference>
<dbReference type="Pfam" id="PF00307">
    <property type="entry name" value="CH"/>
    <property type="match status" value="1"/>
</dbReference>
<dbReference type="Pfam" id="PF01494">
    <property type="entry name" value="FAD_binding_3"/>
    <property type="match status" value="1"/>
</dbReference>
<dbReference type="Pfam" id="PF00412">
    <property type="entry name" value="LIM"/>
    <property type="match status" value="1"/>
</dbReference>
<dbReference type="Pfam" id="PF25413">
    <property type="entry name" value="Rossman_Mical"/>
    <property type="match status" value="1"/>
</dbReference>
<dbReference type="PRINTS" id="PR00420">
    <property type="entry name" value="RNGMNOXGNASE"/>
</dbReference>
<dbReference type="SMART" id="SM00033">
    <property type="entry name" value="CH"/>
    <property type="match status" value="1"/>
</dbReference>
<dbReference type="SMART" id="SM01203">
    <property type="entry name" value="DUF3585"/>
    <property type="match status" value="1"/>
</dbReference>
<dbReference type="SMART" id="SM00132">
    <property type="entry name" value="LIM"/>
    <property type="match status" value="1"/>
</dbReference>
<dbReference type="SUPFAM" id="SSF47576">
    <property type="entry name" value="Calponin-homology domain, CH-domain"/>
    <property type="match status" value="1"/>
</dbReference>
<dbReference type="SUPFAM" id="SSF51905">
    <property type="entry name" value="FAD/NAD(P)-binding domain"/>
    <property type="match status" value="1"/>
</dbReference>
<dbReference type="SUPFAM" id="SSF57716">
    <property type="entry name" value="Glucocorticoid receptor-like (DNA-binding domain)"/>
    <property type="match status" value="1"/>
</dbReference>
<dbReference type="PROSITE" id="PS51848">
    <property type="entry name" value="BMERB"/>
    <property type="match status" value="1"/>
</dbReference>
<dbReference type="PROSITE" id="PS50021">
    <property type="entry name" value="CH"/>
    <property type="match status" value="1"/>
</dbReference>
<dbReference type="PROSITE" id="PS00478">
    <property type="entry name" value="LIM_DOMAIN_1"/>
    <property type="match status" value="1"/>
</dbReference>
<dbReference type="PROSITE" id="PS50023">
    <property type="entry name" value="LIM_DOMAIN_2"/>
    <property type="match status" value="1"/>
</dbReference>
<gene>
    <name evidence="11" type="primary">Mical2</name>
    <name type="synonym">Micalcl</name>
</gene>
<comment type="function">
    <text evidence="2 4">Methionine monooxygenase that promotes depolymerization of F-actin by mediating oxidation of residues 'Met-44' and 'Met-47' on actin to form methionine-sulfoxide, resulting in actin filament disassembly and preventing repolymerization (By similarity). Regulates the disassembly of branched actin networks also by oxidizing ARP3B-containing ARP2/3 complexes leading to ARP3B dissociation from the network. Acts as a key regulator of the SRF signaling pathway elicited by nerve growth factor and serum: mediates oxidation and subsequent depolymerization of nuclear actin, leading to increase MKL1/MRTF-A presence in the nucleus and promote SRF:MKL1/MRTF-A-dependent gene transcription. Does not activate SRF:MKL1/MRTF-A through RhoA (By similarity).</text>
</comment>
<comment type="catalytic activity">
    <reaction evidence="2">
        <text>L-methionyl-[F-actin] + NADPH + O2 + H(+) = L-methionyl-(R)-S-oxide-[F-actin] + NADP(+) + H2O</text>
        <dbReference type="Rhea" id="RHEA:51308"/>
        <dbReference type="Rhea" id="RHEA-COMP:12953"/>
        <dbReference type="Rhea" id="RHEA-COMP:12956"/>
        <dbReference type="ChEBI" id="CHEBI:15377"/>
        <dbReference type="ChEBI" id="CHEBI:15378"/>
        <dbReference type="ChEBI" id="CHEBI:15379"/>
        <dbReference type="ChEBI" id="CHEBI:16044"/>
        <dbReference type="ChEBI" id="CHEBI:45764"/>
        <dbReference type="ChEBI" id="CHEBI:57783"/>
        <dbReference type="ChEBI" id="CHEBI:58349"/>
        <dbReference type="EC" id="1.14.13.225"/>
    </reaction>
</comment>
<comment type="cofactor">
    <cofactor evidence="4">
        <name>FAD</name>
        <dbReference type="ChEBI" id="CHEBI:57692"/>
    </cofactor>
</comment>
<comment type="subunit">
    <text evidence="2 3">Interacts with PLXNA4 (By similarity). Interacts with RAB1B (By similarity). Interacts with MAPK1/ERK2 (By similarity). Interacts with RAB35, RAB8A, RAB10, RAB13 and RAB15 (in their GTP-bound forms); binding to RAB35 is of low affinity compared to other Rab proteins; at least in case of RAB8A may bind 2 molecules of RAB8A simultaneously through a high and a low affinity binding site, respectively (By similarity). May interact with MAPK1/ERK2 (By similarity).</text>
</comment>
<comment type="subcellular location">
    <subcellularLocation>
        <location evidence="2">Nucleus</location>
    </subcellularLocation>
    <subcellularLocation>
        <location evidence="3">Cytoplasm</location>
    </subcellularLocation>
</comment>
<comment type="alternative products">
    <event type="alternative splicing"/>
    <isoform>
        <id>D4A1F2-3</id>
        <name>3</name>
        <sequence type="displayed"/>
    </isoform>
    <isoform>
        <id>D4A1F2-1</id>
        <name>1</name>
        <sequence type="described" ref="VSP_061316 VSP_061318 VSP_061321"/>
    </isoform>
    <isoform>
        <id>D4A1F2-2</id>
        <name>2</name>
        <sequence type="described" ref="VSP_061317 VSP_061319 VSP_061320"/>
    </isoform>
    <isoform>
        <id>D4A1F2-4</id>
        <name>4</name>
        <sequence type="described" ref="VSP_061323 VSP_061324"/>
    </isoform>
    <isoform>
        <id>D4A1F2-5</id>
        <name>5</name>
        <sequence type="described" ref="VSP_061315 VSP_061322 VSP_061323 VSP_061324"/>
    </isoform>
    <isoform>
        <id>D4A1F2-6</id>
        <name>6</name>
        <sequence type="described" ref="VSP_061323"/>
    </isoform>
</comment>
<comment type="domain">
    <text evidence="2">The C-terminal RAB-binding domain (RBD) (1796-1945), also described as bivalent Mical/EHBP Rab binding (bMERB) domain, mediates binding to predominantly RAB8A, RAB10, RAB13 and RAB15 (in their GTP-bound forms).</text>
</comment>
<comment type="similarity">
    <text evidence="10">Belongs to the Mical family.</text>
</comment>
<comment type="sequence caution" evidence="10">
    <conflict type="erroneous initiation">
        <sequence resource="EMBL-CDS" id="AAI00138"/>
    </conflict>
    <text>Truncated N-terminus.</text>
</comment>
<comment type="sequence caution" evidence="10">
    <conflict type="frameshift">
        <sequence resource="EMBL-CDS" id="AAN46735"/>
    </conflict>
</comment>
<evidence type="ECO:0000250" key="1"/>
<evidence type="ECO:0000250" key="2">
    <source>
        <dbReference type="UniProtKB" id="O94851"/>
    </source>
</evidence>
<evidence type="ECO:0000250" key="3">
    <source>
        <dbReference type="UniProtKB" id="Q8BML1"/>
    </source>
</evidence>
<evidence type="ECO:0000250" key="4">
    <source>
        <dbReference type="UniProtKB" id="Q8TDZ2"/>
    </source>
</evidence>
<evidence type="ECO:0000250" key="5">
    <source>
        <dbReference type="UniProtKB" id="Q8VDP3"/>
    </source>
</evidence>
<evidence type="ECO:0000255" key="6">
    <source>
        <dbReference type="PROSITE-ProRule" id="PRU00044"/>
    </source>
</evidence>
<evidence type="ECO:0000255" key="7">
    <source>
        <dbReference type="PROSITE-ProRule" id="PRU00125"/>
    </source>
</evidence>
<evidence type="ECO:0000255" key="8">
    <source>
        <dbReference type="PROSITE-ProRule" id="PRU01195"/>
    </source>
</evidence>
<evidence type="ECO:0000256" key="9">
    <source>
        <dbReference type="SAM" id="MobiDB-lite"/>
    </source>
</evidence>
<evidence type="ECO:0000305" key="10"/>
<evidence type="ECO:0000312" key="11">
    <source>
        <dbReference type="RGD" id="1311773"/>
    </source>
</evidence>
<evidence type="ECO:0007744" key="12">
    <source>
    </source>
</evidence>
<reference key="1">
    <citation type="journal article" date="2004" name="Nature">
        <title>Genome sequence of the Brown Norway rat yields insights into mammalian evolution.</title>
        <authorList>
            <person name="Gibbs R.A."/>
            <person name="Weinstock G.M."/>
            <person name="Metzker M.L."/>
            <person name="Muzny D.M."/>
            <person name="Sodergren E.J."/>
            <person name="Scherer S."/>
            <person name="Scott G."/>
            <person name="Steffen D."/>
            <person name="Worley K.C."/>
            <person name="Burch P.E."/>
            <person name="Okwuonu G."/>
            <person name="Hines S."/>
            <person name="Lewis L."/>
            <person name="Deramo C."/>
            <person name="Delgado O."/>
            <person name="Dugan-Rocha S."/>
            <person name="Miner G."/>
            <person name="Morgan M."/>
            <person name="Hawes A."/>
            <person name="Gill R."/>
            <person name="Holt R.A."/>
            <person name="Adams M.D."/>
            <person name="Amanatides P.G."/>
            <person name="Baden-Tillson H."/>
            <person name="Barnstead M."/>
            <person name="Chin S."/>
            <person name="Evans C.A."/>
            <person name="Ferriera S."/>
            <person name="Fosler C."/>
            <person name="Glodek A."/>
            <person name="Gu Z."/>
            <person name="Jennings D."/>
            <person name="Kraft C.L."/>
            <person name="Nguyen T."/>
            <person name="Pfannkoch C.M."/>
            <person name="Sitter C."/>
            <person name="Sutton G.G."/>
            <person name="Venter J.C."/>
            <person name="Woodage T."/>
            <person name="Smith D."/>
            <person name="Lee H.-M."/>
            <person name="Gustafson E."/>
            <person name="Cahill P."/>
            <person name="Kana A."/>
            <person name="Doucette-Stamm L."/>
            <person name="Weinstock K."/>
            <person name="Fechtel K."/>
            <person name="Weiss R.B."/>
            <person name="Dunn D.M."/>
            <person name="Green E.D."/>
            <person name="Blakesley R.W."/>
            <person name="Bouffard G.G."/>
            <person name="De Jong P.J."/>
            <person name="Osoegawa K."/>
            <person name="Zhu B."/>
            <person name="Marra M."/>
            <person name="Schein J."/>
            <person name="Bosdet I."/>
            <person name="Fjell C."/>
            <person name="Jones S."/>
            <person name="Krzywinski M."/>
            <person name="Mathewson C."/>
            <person name="Siddiqui A."/>
            <person name="Wye N."/>
            <person name="McPherson J."/>
            <person name="Zhao S."/>
            <person name="Fraser C.M."/>
            <person name="Shetty J."/>
            <person name="Shatsman S."/>
            <person name="Geer K."/>
            <person name="Chen Y."/>
            <person name="Abramzon S."/>
            <person name="Nierman W.C."/>
            <person name="Havlak P.H."/>
            <person name="Chen R."/>
            <person name="Durbin K.J."/>
            <person name="Egan A."/>
            <person name="Ren Y."/>
            <person name="Song X.-Z."/>
            <person name="Li B."/>
            <person name="Liu Y."/>
            <person name="Qin X."/>
            <person name="Cawley S."/>
            <person name="Cooney A.J."/>
            <person name="D'Souza L.M."/>
            <person name="Martin K."/>
            <person name="Wu J.Q."/>
            <person name="Gonzalez-Garay M.L."/>
            <person name="Jackson A.R."/>
            <person name="Kalafus K.J."/>
            <person name="McLeod M.P."/>
            <person name="Milosavljevic A."/>
            <person name="Virk D."/>
            <person name="Volkov A."/>
            <person name="Wheeler D.A."/>
            <person name="Zhang Z."/>
            <person name="Bailey J.A."/>
            <person name="Eichler E.E."/>
            <person name="Tuzun E."/>
            <person name="Birney E."/>
            <person name="Mongin E."/>
            <person name="Ureta-Vidal A."/>
            <person name="Woodwark C."/>
            <person name="Zdobnov E."/>
            <person name="Bork P."/>
            <person name="Suyama M."/>
            <person name="Torrents D."/>
            <person name="Alexandersson M."/>
            <person name="Trask B.J."/>
            <person name="Young J.M."/>
            <person name="Huang H."/>
            <person name="Wang H."/>
            <person name="Xing H."/>
            <person name="Daniels S."/>
            <person name="Gietzen D."/>
            <person name="Schmidt J."/>
            <person name="Stevens K."/>
            <person name="Vitt U."/>
            <person name="Wingrove J."/>
            <person name="Camara F."/>
            <person name="Mar Alba M."/>
            <person name="Abril J.F."/>
            <person name="Guigo R."/>
            <person name="Smit A."/>
            <person name="Dubchak I."/>
            <person name="Rubin E.M."/>
            <person name="Couronne O."/>
            <person name="Poliakov A."/>
            <person name="Huebner N."/>
            <person name="Ganten D."/>
            <person name="Goesele C."/>
            <person name="Hummel O."/>
            <person name="Kreitler T."/>
            <person name="Lee Y.-A."/>
            <person name="Monti J."/>
            <person name="Schulz H."/>
            <person name="Zimdahl H."/>
            <person name="Himmelbauer H."/>
            <person name="Lehrach H."/>
            <person name="Jacob H.J."/>
            <person name="Bromberg S."/>
            <person name="Gullings-Handley J."/>
            <person name="Jensen-Seaman M.I."/>
            <person name="Kwitek A.E."/>
            <person name="Lazar J."/>
            <person name="Pasko D."/>
            <person name="Tonellato P.J."/>
            <person name="Twigger S."/>
            <person name="Ponting C.P."/>
            <person name="Duarte J.M."/>
            <person name="Rice S."/>
            <person name="Goodstadt L."/>
            <person name="Beatson S.A."/>
            <person name="Emes R.D."/>
            <person name="Winter E.E."/>
            <person name="Webber C."/>
            <person name="Brandt P."/>
            <person name="Nyakatura G."/>
            <person name="Adetobi M."/>
            <person name="Chiaromonte F."/>
            <person name="Elnitski L."/>
            <person name="Eswara P."/>
            <person name="Hardison R.C."/>
            <person name="Hou M."/>
            <person name="Kolbe D."/>
            <person name="Makova K."/>
            <person name="Miller W."/>
            <person name="Nekrutenko A."/>
            <person name="Riemer C."/>
            <person name="Schwartz S."/>
            <person name="Taylor J."/>
            <person name="Yang S."/>
            <person name="Zhang Y."/>
            <person name="Lindpaintner K."/>
            <person name="Andrews T.D."/>
            <person name="Caccamo M."/>
            <person name="Clamp M."/>
            <person name="Clarke L."/>
            <person name="Curwen V."/>
            <person name="Durbin R.M."/>
            <person name="Eyras E."/>
            <person name="Searle S.M."/>
            <person name="Cooper G.M."/>
            <person name="Batzoglou S."/>
            <person name="Brudno M."/>
            <person name="Sidow A."/>
            <person name="Stone E.A."/>
            <person name="Payseur B.A."/>
            <person name="Bourque G."/>
            <person name="Lopez-Otin C."/>
            <person name="Puente X.S."/>
            <person name="Chakrabarti K."/>
            <person name="Chatterji S."/>
            <person name="Dewey C."/>
            <person name="Pachter L."/>
            <person name="Bray N."/>
            <person name="Yap V.B."/>
            <person name="Caspi A."/>
            <person name="Tesler G."/>
            <person name="Pevzner P.A."/>
            <person name="Haussler D."/>
            <person name="Roskin K.M."/>
            <person name="Baertsch R."/>
            <person name="Clawson H."/>
            <person name="Furey T.S."/>
            <person name="Hinrichs A.S."/>
            <person name="Karolchik D."/>
            <person name="Kent W.J."/>
            <person name="Rosenbloom K.R."/>
            <person name="Trumbower H."/>
            <person name="Weirauch M."/>
            <person name="Cooper D.N."/>
            <person name="Stenson P.D."/>
            <person name="Ma B."/>
            <person name="Brent M."/>
            <person name="Arumugam M."/>
            <person name="Shteynberg D."/>
            <person name="Copley R.R."/>
            <person name="Taylor M.S."/>
            <person name="Riethman H."/>
            <person name="Mudunuri U."/>
            <person name="Peterson J."/>
            <person name="Guyer M."/>
            <person name="Felsenfeld A."/>
            <person name="Old S."/>
            <person name="Mockrin S."/>
            <person name="Collins F.S."/>
        </authorList>
    </citation>
    <scope>NUCLEOTIDE SEQUENCE [LARGE SCALE GENOMIC DNA]</scope>
    <source>
        <strain>Brown Norway</strain>
    </source>
</reference>
<reference key="2">
    <citation type="journal article" date="2004" name="Genome Res.">
        <title>The status, quality, and expansion of the NIH full-length cDNA project: the Mammalian Gene Collection (MGC).</title>
        <authorList>
            <consortium name="The MGC Project Team"/>
        </authorList>
    </citation>
    <scope>NUCLEOTIDE SEQUENCE [LARGE SCALE MRNA] (ISOFORM 5)</scope>
    <scope>NUCLEOTIDE SEQUENCE [LARGE SCALE MRNA] OF 1372-1948 (ISOFORM 6)</scope>
    <source>
        <tissue>Testis</tissue>
    </source>
</reference>
<reference key="3">
    <citation type="submission" date="2002-09" db="EMBL/GenBank/DDBJ databases">
        <title>A new gene from rat testis cDNA library.</title>
        <authorList>
            <person name="Liang G."/>
            <person name="Miao S.Y."/>
            <person name="Zhang X.D."/>
            <person name="Wang L.J."/>
            <person name="Wang L.F."/>
        </authorList>
    </citation>
    <scope>NUCLEOTIDE SEQUENCE [LARGE SCALE MRNA] OF 1376-1948 (ISOFORM 4)</scope>
    <source>
        <tissue>Testis</tissue>
    </source>
</reference>
<reference key="4">
    <citation type="journal article" date="2012" name="Nat. Commun.">
        <title>Quantitative maps of protein phosphorylation sites across 14 different rat organs and tissues.</title>
        <authorList>
            <person name="Lundby A."/>
            <person name="Secher A."/>
            <person name="Lage K."/>
            <person name="Nordsborg N.B."/>
            <person name="Dmytriyev A."/>
            <person name="Lundby C."/>
            <person name="Olsen J.V."/>
        </authorList>
    </citation>
    <scope>PHOSPHORYLATION [LARGE SCALE ANALYSIS] AT SER-1677</scope>
    <scope>IDENTIFICATION BY MASS SPECTROMETRY [LARGE SCALE ANALYSIS]</scope>
</reference>